<evidence type="ECO:0000255" key="1">
    <source>
        <dbReference type="PROSITE-ProRule" id="PRU00409"/>
    </source>
</evidence>
<evidence type="ECO:0000255" key="2">
    <source>
        <dbReference type="PROSITE-ProRule" id="PRU00969"/>
    </source>
</evidence>
<evidence type="ECO:0000255" key="3">
    <source>
        <dbReference type="PROSITE-ProRule" id="PRU01066"/>
    </source>
</evidence>
<evidence type="ECO:0000269" key="4">
    <source>
    </source>
</evidence>
<evidence type="ECO:0000269" key="5">
    <source>
    </source>
</evidence>
<evidence type="ECO:0000305" key="6"/>
<evidence type="ECO:0000305" key="7">
    <source>
    </source>
</evidence>
<reference key="1">
    <citation type="journal article" date="1994" name="J. Bacteriol.">
        <title>Lipid synthesis in mycobacteria: characterization of the biotin carboxyl carrier protein genes from Mycobacterium leprae and M. tuberculosis.</title>
        <authorList>
            <person name="Norman E."/>
            <person name="de Smet K.A.L."/>
            <person name="Stoker N.G."/>
            <person name="Ratledge C."/>
            <person name="Wheeler P.R."/>
            <person name="Dale J.W."/>
        </authorList>
    </citation>
    <scope>NUCLEOTIDE SEQUENCE [GENOMIC DNA]</scope>
    <source>
        <strain>Isolate 50410</strain>
    </source>
</reference>
<reference key="2">
    <citation type="journal article" date="1998" name="Nature">
        <title>Deciphering the biology of Mycobacterium tuberculosis from the complete genome sequence.</title>
        <authorList>
            <person name="Cole S.T."/>
            <person name="Brosch R."/>
            <person name="Parkhill J."/>
            <person name="Garnier T."/>
            <person name="Churcher C.M."/>
            <person name="Harris D.E."/>
            <person name="Gordon S.V."/>
            <person name="Eiglmeier K."/>
            <person name="Gas S."/>
            <person name="Barry C.E. III"/>
            <person name="Tekaia F."/>
            <person name="Badcock K."/>
            <person name="Basham D."/>
            <person name="Brown D."/>
            <person name="Chillingworth T."/>
            <person name="Connor R."/>
            <person name="Davies R.M."/>
            <person name="Devlin K."/>
            <person name="Feltwell T."/>
            <person name="Gentles S."/>
            <person name="Hamlin N."/>
            <person name="Holroyd S."/>
            <person name="Hornsby T."/>
            <person name="Jagels K."/>
            <person name="Krogh A."/>
            <person name="McLean J."/>
            <person name="Moule S."/>
            <person name="Murphy L.D."/>
            <person name="Oliver S."/>
            <person name="Osborne J."/>
            <person name="Quail M.A."/>
            <person name="Rajandream M.A."/>
            <person name="Rogers J."/>
            <person name="Rutter S."/>
            <person name="Seeger K."/>
            <person name="Skelton S."/>
            <person name="Squares S."/>
            <person name="Squares R."/>
            <person name="Sulston J.E."/>
            <person name="Taylor K."/>
            <person name="Whitehead S."/>
            <person name="Barrell B.G."/>
        </authorList>
    </citation>
    <scope>NUCLEOTIDE SEQUENCE [LARGE SCALE GENOMIC DNA]</scope>
    <source>
        <strain>ATCC 25618 / H37Rv</strain>
    </source>
</reference>
<reference key="3">
    <citation type="journal article" date="2010" name="PLoS ONE">
        <title>Prokaryotic ubiquitin-like protein (Pup) proteome of Mycobacterium tuberculosis.</title>
        <authorList>
            <person name="Festa R.A."/>
            <person name="McAllister F."/>
            <person name="Pearce M.J."/>
            <person name="Mintseris J."/>
            <person name="Burns K.E."/>
            <person name="Gygi S.P."/>
            <person name="Darwin K.H."/>
        </authorList>
    </citation>
    <scope>PUPYLATION AT LYS-322</scope>
    <scope>IDENTIFICATION BY MASS SPECTROMETRY</scope>
    <source>
        <strain>ATCC 25618 / H37Rv</strain>
    </source>
</reference>
<reference key="4">
    <citation type="journal article" date="2011" name="Mol. Cell. Proteomics">
        <title>Proteogenomic analysis of Mycobacterium tuberculosis by high resolution mass spectrometry.</title>
        <authorList>
            <person name="Kelkar D.S."/>
            <person name="Kumar D."/>
            <person name="Kumar P."/>
            <person name="Balakrishnan L."/>
            <person name="Muthusamy B."/>
            <person name="Yadav A.K."/>
            <person name="Shrivastava P."/>
            <person name="Marimuthu A."/>
            <person name="Anand S."/>
            <person name="Sundaram H."/>
            <person name="Kingsbury R."/>
            <person name="Harsha H.C."/>
            <person name="Nair B."/>
            <person name="Prasad T.S."/>
            <person name="Chauhan D.S."/>
            <person name="Katoch K."/>
            <person name="Katoch V.M."/>
            <person name="Kumar P."/>
            <person name="Chaerkady R."/>
            <person name="Ramachandran S."/>
            <person name="Dash D."/>
            <person name="Pandey A."/>
        </authorList>
    </citation>
    <scope>IDENTIFICATION BY MASS SPECTROMETRY [LARGE SCALE ANALYSIS]</scope>
    <source>
        <strain>ATCC 25618 / H37Rv</strain>
    </source>
</reference>
<reference key="5">
    <citation type="journal article" date="2015" name="PLoS Pathog.">
        <title>Characterization of the mycobacterial acyl-CoA carboxylase holo complexes reveals their functional expansion into amino acid catabolism.</title>
        <authorList>
            <person name="Ehebauer M.T."/>
            <person name="Zimmermann M."/>
            <person name="Jakobi A.J."/>
            <person name="Noens E.E."/>
            <person name="Laubitz D."/>
            <person name="Cichocki B."/>
            <person name="Marrakchi H."/>
            <person name="Laneelle M.A."/>
            <person name="Daffe M."/>
            <person name="Sachse C."/>
            <person name="Dziembowski A."/>
            <person name="Sauer U."/>
            <person name="Wilmanns M."/>
        </authorList>
    </citation>
    <scope>FUNCTION</scope>
    <scope>CATALYTIC ACTIVITY</scope>
    <scope>PATHWAY</scope>
    <scope>SUBUNIT</scope>
</reference>
<comment type="function">
    <text evidence="5">Component of a biotin-dependent acyl-CoA carboxylase complex. This subunit catalyzes the ATP-dependent carboxylation of the biotin carried by the biotin carboxyl carrier (BCC) domain, resulting in the formation of carboxyl biotin (PubMed:25695631). When associated with the beta1 subunit AccD1, is involved in branched amino-acid catabolism with methylcrotonyl coenzyme A as the substrate (PubMed:25695631).</text>
</comment>
<comment type="catalytic activity">
    <reaction evidence="7">
        <text>N(6)-biotinyl-L-lysyl-[protein] + hydrogencarbonate + ATP = N(6)-carboxybiotinyl-L-lysyl-[protein] + ADP + phosphate + H(+)</text>
        <dbReference type="Rhea" id="RHEA:13501"/>
        <dbReference type="Rhea" id="RHEA-COMP:10505"/>
        <dbReference type="Rhea" id="RHEA-COMP:10506"/>
        <dbReference type="ChEBI" id="CHEBI:15378"/>
        <dbReference type="ChEBI" id="CHEBI:17544"/>
        <dbReference type="ChEBI" id="CHEBI:30616"/>
        <dbReference type="ChEBI" id="CHEBI:43474"/>
        <dbReference type="ChEBI" id="CHEBI:83144"/>
        <dbReference type="ChEBI" id="CHEBI:83145"/>
        <dbReference type="ChEBI" id="CHEBI:456216"/>
        <dbReference type="EC" id="6.3.4.14"/>
    </reaction>
    <physiologicalReaction direction="left-to-right" evidence="7">
        <dbReference type="Rhea" id="RHEA:13502"/>
    </physiologicalReaction>
</comment>
<comment type="cofactor">
    <cofactor evidence="1">
        <name>Mg(2+)</name>
        <dbReference type="ChEBI" id="CHEBI:18420"/>
    </cofactor>
    <cofactor evidence="1">
        <name>Mn(2+)</name>
        <dbReference type="ChEBI" id="CHEBI:29035"/>
    </cofactor>
    <text evidence="1">Binds 2 magnesium or manganese ions per subunit.</text>
</comment>
<comment type="cofactor">
    <cofactor evidence="3">
        <name>biotin</name>
        <dbReference type="ChEBI" id="CHEBI:57586"/>
    </cofactor>
</comment>
<comment type="pathway">
    <text evidence="5">Amino-acid degradation; L-leucine degradation.</text>
</comment>
<comment type="subunit">
    <text evidence="5">The biotin-dependent acyl-CoA carboxylase complex is composed of AccA1, which contains the biotin carboxylase (BC) and biotin carboxyl carrier protein (BCCP) domains, and AccD1, which contains the carboxyl transferase (CT) domain (PubMed:25695631). The AccA1/AccD1 complex forms a dodecamer (PubMed:25695631).</text>
</comment>
<keyword id="KW-0067">ATP-binding</keyword>
<keyword id="KW-0092">Biotin</keyword>
<keyword id="KW-1017">Isopeptide bond</keyword>
<keyword id="KW-0436">Ligase</keyword>
<keyword id="KW-0460">Magnesium</keyword>
<keyword id="KW-0464">Manganese</keyword>
<keyword id="KW-0479">Metal-binding</keyword>
<keyword id="KW-0547">Nucleotide-binding</keyword>
<keyword id="KW-1185">Reference proteome</keyword>
<keyword id="KW-0832">Ubl conjugation</keyword>
<dbReference type="EC" id="6.3.4.14" evidence="7"/>
<dbReference type="EMBL" id="Z19549">
    <property type="protein sequence ID" value="CAA79609.1"/>
    <property type="molecule type" value="Genomic_DNA"/>
</dbReference>
<dbReference type="EMBL" id="AL123456">
    <property type="protein sequence ID" value="CCP45295.1"/>
    <property type="molecule type" value="Genomic_DNA"/>
</dbReference>
<dbReference type="PIR" id="B55579">
    <property type="entry name" value="B55579"/>
</dbReference>
<dbReference type="RefSeq" id="NP_217017.1">
    <property type="nucleotide sequence ID" value="NC_000962.3"/>
</dbReference>
<dbReference type="RefSeq" id="WP_003899356.1">
    <property type="nucleotide sequence ID" value="NZ_NVQJ01000063.1"/>
</dbReference>
<dbReference type="SMR" id="P9WPQ3"/>
<dbReference type="FunCoup" id="P9WPQ3">
    <property type="interactions" value="521"/>
</dbReference>
<dbReference type="STRING" id="83332.Rv2501c"/>
<dbReference type="PaxDb" id="83332-Rv2501c"/>
<dbReference type="DNASU" id="887309"/>
<dbReference type="GeneID" id="887309"/>
<dbReference type="KEGG" id="mtu:Rv2501c"/>
<dbReference type="KEGG" id="mtv:RVBD_2501c"/>
<dbReference type="TubercuList" id="Rv2501c"/>
<dbReference type="eggNOG" id="COG4770">
    <property type="taxonomic scope" value="Bacteria"/>
</dbReference>
<dbReference type="InParanoid" id="P9WPQ3"/>
<dbReference type="OrthoDB" id="9760256at2"/>
<dbReference type="PhylomeDB" id="P9WPQ3"/>
<dbReference type="UniPathway" id="UPA00363"/>
<dbReference type="Proteomes" id="UP000001584">
    <property type="component" value="Chromosome"/>
</dbReference>
<dbReference type="GO" id="GO:0005886">
    <property type="term" value="C:plasma membrane"/>
    <property type="evidence" value="ECO:0007005"/>
    <property type="project" value="MTBBASE"/>
</dbReference>
<dbReference type="GO" id="GO:0005524">
    <property type="term" value="F:ATP binding"/>
    <property type="evidence" value="ECO:0007669"/>
    <property type="project" value="UniProtKB-KW"/>
</dbReference>
<dbReference type="GO" id="GO:0004075">
    <property type="term" value="F:biotin carboxylase activity"/>
    <property type="evidence" value="ECO:0007669"/>
    <property type="project" value="UniProtKB-EC"/>
</dbReference>
<dbReference type="GO" id="GO:0046872">
    <property type="term" value="F:metal ion binding"/>
    <property type="evidence" value="ECO:0007669"/>
    <property type="project" value="UniProtKB-KW"/>
</dbReference>
<dbReference type="GO" id="GO:0006552">
    <property type="term" value="P:L-leucine catabolic process"/>
    <property type="evidence" value="ECO:0007669"/>
    <property type="project" value="UniProtKB-UniPathway"/>
</dbReference>
<dbReference type="CDD" id="cd06850">
    <property type="entry name" value="biotinyl_domain"/>
    <property type="match status" value="1"/>
</dbReference>
<dbReference type="FunFam" id="2.40.50.100:FF:000003">
    <property type="entry name" value="Acetyl-CoA carboxylase biotin carboxyl carrier protein"/>
    <property type="match status" value="1"/>
</dbReference>
<dbReference type="FunFam" id="3.30.470.20:FF:000028">
    <property type="entry name" value="Methylcrotonoyl-CoA carboxylase subunit alpha, mitochondrial"/>
    <property type="match status" value="1"/>
</dbReference>
<dbReference type="FunFam" id="3.40.50.20:FF:000010">
    <property type="entry name" value="Propionyl-CoA carboxylase subunit alpha"/>
    <property type="match status" value="1"/>
</dbReference>
<dbReference type="Gene3D" id="2.40.50.100">
    <property type="match status" value="1"/>
</dbReference>
<dbReference type="Gene3D" id="3.30.470.20">
    <property type="entry name" value="ATP-grasp fold, B domain"/>
    <property type="match status" value="1"/>
</dbReference>
<dbReference type="InterPro" id="IPR011761">
    <property type="entry name" value="ATP-grasp"/>
</dbReference>
<dbReference type="InterPro" id="IPR005481">
    <property type="entry name" value="BC-like_N"/>
</dbReference>
<dbReference type="InterPro" id="IPR001882">
    <property type="entry name" value="Biotin_BS"/>
</dbReference>
<dbReference type="InterPro" id="IPR050856">
    <property type="entry name" value="Biotin_carboxylase_complex"/>
</dbReference>
<dbReference type="InterPro" id="IPR011764">
    <property type="entry name" value="Biotin_carboxylation_dom"/>
</dbReference>
<dbReference type="InterPro" id="IPR005482">
    <property type="entry name" value="Biotin_COase_C"/>
</dbReference>
<dbReference type="InterPro" id="IPR000089">
    <property type="entry name" value="Biotin_lipoyl"/>
</dbReference>
<dbReference type="InterPro" id="IPR005479">
    <property type="entry name" value="CbamoylP_synth_lsu-like_ATP-bd"/>
</dbReference>
<dbReference type="InterPro" id="IPR048429">
    <property type="entry name" value="MCC_alpha_BT"/>
</dbReference>
<dbReference type="InterPro" id="IPR016185">
    <property type="entry name" value="PreATP-grasp_dom_sf"/>
</dbReference>
<dbReference type="InterPro" id="IPR011054">
    <property type="entry name" value="Rudment_hybrid_motif"/>
</dbReference>
<dbReference type="InterPro" id="IPR011053">
    <property type="entry name" value="Single_hybrid_motif"/>
</dbReference>
<dbReference type="PANTHER" id="PTHR18866">
    <property type="entry name" value="CARBOXYLASE:PYRUVATE/ACETYL-COA/PROPIONYL-COA CARBOXYLASE"/>
    <property type="match status" value="1"/>
</dbReference>
<dbReference type="PANTHER" id="PTHR18866:SF33">
    <property type="entry name" value="METHYLCROTONOYL-COA CARBOXYLASE SUBUNIT ALPHA, MITOCHONDRIAL-RELATED"/>
    <property type="match status" value="1"/>
</dbReference>
<dbReference type="Pfam" id="PF02785">
    <property type="entry name" value="Biotin_carb_C"/>
    <property type="match status" value="1"/>
</dbReference>
<dbReference type="Pfam" id="PF00289">
    <property type="entry name" value="Biotin_carb_N"/>
    <property type="match status" value="1"/>
</dbReference>
<dbReference type="Pfam" id="PF00364">
    <property type="entry name" value="Biotin_lipoyl"/>
    <property type="match status" value="1"/>
</dbReference>
<dbReference type="Pfam" id="PF21139">
    <property type="entry name" value="BT_MCC_alpha"/>
    <property type="match status" value="1"/>
</dbReference>
<dbReference type="Pfam" id="PF02786">
    <property type="entry name" value="CPSase_L_D2"/>
    <property type="match status" value="1"/>
</dbReference>
<dbReference type="SMART" id="SM00878">
    <property type="entry name" value="Biotin_carb_C"/>
    <property type="match status" value="1"/>
</dbReference>
<dbReference type="SUPFAM" id="SSF56059">
    <property type="entry name" value="Glutathione synthetase ATP-binding domain-like"/>
    <property type="match status" value="1"/>
</dbReference>
<dbReference type="SUPFAM" id="SSF52440">
    <property type="entry name" value="PreATP-grasp domain"/>
    <property type="match status" value="1"/>
</dbReference>
<dbReference type="SUPFAM" id="SSF51246">
    <property type="entry name" value="Rudiment single hybrid motif"/>
    <property type="match status" value="1"/>
</dbReference>
<dbReference type="SUPFAM" id="SSF51230">
    <property type="entry name" value="Single hybrid motif"/>
    <property type="match status" value="1"/>
</dbReference>
<dbReference type="PROSITE" id="PS50975">
    <property type="entry name" value="ATP_GRASP"/>
    <property type="match status" value="1"/>
</dbReference>
<dbReference type="PROSITE" id="PS50979">
    <property type="entry name" value="BC"/>
    <property type="match status" value="1"/>
</dbReference>
<dbReference type="PROSITE" id="PS00188">
    <property type="entry name" value="BIOTIN"/>
    <property type="match status" value="1"/>
</dbReference>
<dbReference type="PROSITE" id="PS50968">
    <property type="entry name" value="BIOTINYL_LIPOYL"/>
    <property type="match status" value="1"/>
</dbReference>
<dbReference type="PROSITE" id="PS00866">
    <property type="entry name" value="CPSASE_1"/>
    <property type="match status" value="1"/>
</dbReference>
<dbReference type="PROSITE" id="PS00867">
    <property type="entry name" value="CPSASE_2"/>
    <property type="match status" value="1"/>
</dbReference>
<organism>
    <name type="scientific">Mycobacterium tuberculosis (strain ATCC 25618 / H37Rv)</name>
    <dbReference type="NCBI Taxonomy" id="83332"/>
    <lineage>
        <taxon>Bacteria</taxon>
        <taxon>Bacillati</taxon>
        <taxon>Actinomycetota</taxon>
        <taxon>Actinomycetes</taxon>
        <taxon>Mycobacteriales</taxon>
        <taxon>Mycobacteriaceae</taxon>
        <taxon>Mycobacterium</taxon>
        <taxon>Mycobacterium tuberculosis complex</taxon>
    </lineage>
</organism>
<accession>P9WPQ3</accession>
<accession>L0T9T8</accession>
<accession>P0A508</accession>
<accession>P46401</accession>
<proteinExistence type="evidence at protein level"/>
<sequence length="654" mass="70592">MFDTVLVANRGEIAVRVIRTLRRLGIRSVAVYSDPDVDARHVLEADAAVRLGPAPARESYLDIGKVLDAAARTGAQAIHPGYGFLAENADFAAACERARVVFLGPPARAIEVMGDKIAAKNAVAAFDVPVVPGVARAGLTDDALVTAAAEVGYPVLIKPSAGGGGKGMRLVQDPARLPEALVSARREAMSSFGDDTLFLERFVLRPRHIEVQVLADAHGNVVHLGERECSLQRRHQKVIEEAPSPLLDPQTRERIGVAACNTARCVDYVGAGTVEFIVSAQRPDEFFFMEMNTRLQVEHPVTEAITGLDLVEWQLRVGAGEKLGFAQNDIELRGHAIEARVYAEDPAREFLPTGGRVLAVFEPAGPGVRVDSSLLGGTVVGSDYDPLLTKVIAHGADREEALDRLDQALARTAVLGVQTNVEFLRFLLADERVRVGDLDTAVLDERSADFTARPAPDDVLAAGGLYRQWALARRAQGDLWAAPSGWRGGGHMAPVRTAMRTPLRSETVSVWGPPESAQVQVGDGEIDCASVQVTREQMSVTISGLRRDYRWAEADRHLWIADERGTWHLREAEEHKIHRAVGARPAEVVSPMPGSVIAVQVESGSQISAGDVVVVVEAMKMEHSLEAPVSGRVQVLVSVGDQVKVEQVLARIKD</sequence>
<protein>
    <recommendedName>
        <fullName evidence="6">Biotin-dependent 3-methylcrotonyl-coenzyme A carboxylase alpha1 subunit</fullName>
    </recommendedName>
    <domain>
        <recommendedName>
            <fullName evidence="6">Biotin carboxylase</fullName>
            <shortName evidence="6">BC</shortName>
            <ecNumber evidence="7">6.3.4.14</ecNumber>
        </recommendedName>
    </domain>
    <domain>
        <recommendedName>
            <fullName evidence="6">Biotin carboxyl carrier protein</fullName>
            <shortName evidence="6">BCCP</shortName>
        </recommendedName>
    </domain>
</protein>
<name>ACCA1_MYCTU</name>
<feature type="chain" id="PRO_0000146798" description="Biotin-dependent 3-methylcrotonyl-coenzyme A carboxylase alpha1 subunit">
    <location>
        <begin position="1"/>
        <end position="654"/>
    </location>
</feature>
<feature type="domain" description="Biotin carboxylation" evidence="2">
    <location>
        <begin position="1"/>
        <end position="448"/>
    </location>
</feature>
<feature type="domain" description="ATP-grasp" evidence="1">
    <location>
        <begin position="120"/>
        <end position="319"/>
    </location>
</feature>
<feature type="domain" description="Biotinyl-binding" evidence="3">
    <location>
        <begin position="578"/>
        <end position="653"/>
    </location>
</feature>
<feature type="binding site" evidence="1">
    <location>
        <begin position="148"/>
        <end position="209"/>
    </location>
    <ligand>
        <name>ATP</name>
        <dbReference type="ChEBI" id="CHEBI:30616"/>
    </ligand>
</feature>
<feature type="binding site" evidence="1">
    <location>
        <position position="275"/>
    </location>
    <ligand>
        <name>Mg(2+)</name>
        <dbReference type="ChEBI" id="CHEBI:18420"/>
        <label>1</label>
    </ligand>
</feature>
<feature type="binding site" evidence="1">
    <location>
        <position position="275"/>
    </location>
    <ligand>
        <name>Mn(2+)</name>
        <dbReference type="ChEBI" id="CHEBI:29035"/>
        <label>1</label>
    </ligand>
</feature>
<feature type="binding site" evidence="1">
    <location>
        <position position="290"/>
    </location>
    <ligand>
        <name>Mg(2+)</name>
        <dbReference type="ChEBI" id="CHEBI:18420"/>
        <label>1</label>
    </ligand>
</feature>
<feature type="binding site" evidence="1">
    <location>
        <position position="290"/>
    </location>
    <ligand>
        <name>Mg(2+)</name>
        <dbReference type="ChEBI" id="CHEBI:18420"/>
        <label>2</label>
    </ligand>
</feature>
<feature type="binding site" evidence="1">
    <location>
        <position position="290"/>
    </location>
    <ligand>
        <name>Mn(2+)</name>
        <dbReference type="ChEBI" id="CHEBI:29035"/>
        <label>1</label>
    </ligand>
</feature>
<feature type="binding site" evidence="1">
    <location>
        <position position="290"/>
    </location>
    <ligand>
        <name>Mn(2+)</name>
        <dbReference type="ChEBI" id="CHEBI:29035"/>
        <label>2</label>
    </ligand>
</feature>
<feature type="binding site" evidence="1">
    <location>
        <position position="292"/>
    </location>
    <ligand>
        <name>Mg(2+)</name>
        <dbReference type="ChEBI" id="CHEBI:18420"/>
        <label>2</label>
    </ligand>
</feature>
<feature type="binding site" evidence="1">
    <location>
        <position position="292"/>
    </location>
    <ligand>
        <name>Mn(2+)</name>
        <dbReference type="ChEBI" id="CHEBI:29035"/>
        <label>2</label>
    </ligand>
</feature>
<feature type="modified residue" description="N6-biotinyllysine" evidence="3">
    <location>
        <position position="620"/>
    </location>
</feature>
<feature type="cross-link" description="Isoglutamyl lysine isopeptide (Lys-Gln) (interchain with Q-Cter in protein Pup)" evidence="4">
    <location>
        <position position="322"/>
    </location>
</feature>
<gene>
    <name type="primary">accA1</name>
    <name type="synonym">bccA</name>
    <name type="ordered locus">Rv2501c</name>
    <name type="ORF">MTCY07A7.07c</name>
</gene>